<proteinExistence type="inferred from homology"/>
<sequence length="394" mass="44113">MNKYKRIFLVVMDSVGIGEAPDAEQFGDLGSDTIGHIAEHMNGLHMPNMVKLGLGNIREMKGISKVEKPLGYYTKMQEKSTGKDTMTGHWEIMGLYIDTPFQVFPEGFPKELLDELEEKTGRKIIGNKPASGTEILDELGQEQMETGSLIVYTSADSVLQIAAHEEVVPLDELYKICKIARELTLDEKYMVGRVIARPFVGEPGNFTRTPNRHDYALKPFGRTVMNELKDSDYDVIAIGKISDIYDGEGVTESLRTKSNMDGMDKLVDTLNMDFTGLSFLNLVDFDALFGHRRDPQGYGEALQEYDARLPEVFEKLKEDDLLLITADHGNDPVHHGTDHTREYVPLLAYSPSMKEGGQELPLRQTFADIGATVAENFGVKMPEYGTSFLNELKK</sequence>
<keyword id="KW-0963">Cytoplasm</keyword>
<keyword id="KW-0413">Isomerase</keyword>
<keyword id="KW-0464">Manganese</keyword>
<keyword id="KW-0479">Metal-binding</keyword>
<reference key="1">
    <citation type="journal article" date="2007" name="J. Bacteriol.">
        <title>The complete genome sequence of Bacillus thuringiensis Al Hakam.</title>
        <authorList>
            <person name="Challacombe J.F."/>
            <person name="Altherr M.R."/>
            <person name="Xie G."/>
            <person name="Bhotika S.S."/>
            <person name="Brown N."/>
            <person name="Bruce D."/>
            <person name="Campbell C.S."/>
            <person name="Campbell M.L."/>
            <person name="Chen J."/>
            <person name="Chertkov O."/>
            <person name="Cleland C."/>
            <person name="Dimitrijevic M."/>
            <person name="Doggett N.A."/>
            <person name="Fawcett J.J."/>
            <person name="Glavina T."/>
            <person name="Goodwin L.A."/>
            <person name="Green L.D."/>
            <person name="Han C.S."/>
            <person name="Hill K.K."/>
            <person name="Hitchcock P."/>
            <person name="Jackson P.J."/>
            <person name="Keim P."/>
            <person name="Kewalramani A.R."/>
            <person name="Longmire J."/>
            <person name="Lucas S."/>
            <person name="Malfatti S."/>
            <person name="Martinez D."/>
            <person name="McMurry K."/>
            <person name="Meincke L.J."/>
            <person name="Misra M."/>
            <person name="Moseman B.L."/>
            <person name="Mundt M."/>
            <person name="Munk A.C."/>
            <person name="Okinaka R.T."/>
            <person name="Parson-Quintana B."/>
            <person name="Reilly L.P."/>
            <person name="Richardson P."/>
            <person name="Robinson D.L."/>
            <person name="Saunders E."/>
            <person name="Tapia R."/>
            <person name="Tesmer J.G."/>
            <person name="Thayer N."/>
            <person name="Thompson L.S."/>
            <person name="Tice H."/>
            <person name="Ticknor L.O."/>
            <person name="Wills P.L."/>
            <person name="Gilna P."/>
            <person name="Brettin T.S."/>
        </authorList>
    </citation>
    <scope>NUCLEOTIDE SEQUENCE [LARGE SCALE GENOMIC DNA]</scope>
    <source>
        <strain>Al Hakam</strain>
    </source>
</reference>
<comment type="function">
    <text evidence="1">Isomerase that catalyzes the conversion of deoxy-ribose 1-phosphate (dRib-1-P) and ribose 1-phosphate (Rib-1-P) to deoxy-ribose 5-phosphate (dRib-5-P) and ribose 5-phosphate (Rib-5-P), respectively.</text>
</comment>
<comment type="catalytic activity">
    <reaction evidence="1">
        <text>2-deoxy-alpha-D-ribose 1-phosphate = 2-deoxy-D-ribose 5-phosphate</text>
        <dbReference type="Rhea" id="RHEA:27658"/>
        <dbReference type="ChEBI" id="CHEBI:57259"/>
        <dbReference type="ChEBI" id="CHEBI:62877"/>
        <dbReference type="EC" id="5.4.2.7"/>
    </reaction>
</comment>
<comment type="catalytic activity">
    <reaction evidence="1">
        <text>alpha-D-ribose 1-phosphate = D-ribose 5-phosphate</text>
        <dbReference type="Rhea" id="RHEA:18793"/>
        <dbReference type="ChEBI" id="CHEBI:57720"/>
        <dbReference type="ChEBI" id="CHEBI:78346"/>
        <dbReference type="EC" id="5.4.2.7"/>
    </reaction>
</comment>
<comment type="cofactor">
    <cofactor evidence="1">
        <name>Mn(2+)</name>
        <dbReference type="ChEBI" id="CHEBI:29035"/>
    </cofactor>
    <text evidence="1">Binds 2 manganese ions.</text>
</comment>
<comment type="pathway">
    <text evidence="1">Carbohydrate degradation; 2-deoxy-D-ribose 1-phosphate degradation; D-glyceraldehyde 3-phosphate and acetaldehyde from 2-deoxy-alpha-D-ribose 1-phosphate: step 1/2.</text>
</comment>
<comment type="subcellular location">
    <subcellularLocation>
        <location evidence="1">Cytoplasm</location>
    </subcellularLocation>
</comment>
<comment type="similarity">
    <text evidence="1">Belongs to the phosphopentomutase family.</text>
</comment>
<dbReference type="EC" id="5.4.2.7" evidence="1"/>
<dbReference type="EMBL" id="CP000485">
    <property type="protein sequence ID" value="ABK86934.1"/>
    <property type="molecule type" value="Genomic_DNA"/>
</dbReference>
<dbReference type="RefSeq" id="WP_001046067.1">
    <property type="nucleotide sequence ID" value="NC_008600.1"/>
</dbReference>
<dbReference type="SMR" id="A0RI91"/>
<dbReference type="KEGG" id="btl:BALH_3705"/>
<dbReference type="HOGENOM" id="CLU_053861_0_0_9"/>
<dbReference type="UniPathway" id="UPA00002">
    <property type="reaction ID" value="UER00467"/>
</dbReference>
<dbReference type="GO" id="GO:0005829">
    <property type="term" value="C:cytosol"/>
    <property type="evidence" value="ECO:0007669"/>
    <property type="project" value="TreeGrafter"/>
</dbReference>
<dbReference type="GO" id="GO:0000287">
    <property type="term" value="F:magnesium ion binding"/>
    <property type="evidence" value="ECO:0007669"/>
    <property type="project" value="InterPro"/>
</dbReference>
<dbReference type="GO" id="GO:0030145">
    <property type="term" value="F:manganese ion binding"/>
    <property type="evidence" value="ECO:0007669"/>
    <property type="project" value="UniProtKB-UniRule"/>
</dbReference>
<dbReference type="GO" id="GO:0008973">
    <property type="term" value="F:phosphopentomutase activity"/>
    <property type="evidence" value="ECO:0007669"/>
    <property type="project" value="UniProtKB-UniRule"/>
</dbReference>
<dbReference type="GO" id="GO:0006018">
    <property type="term" value="P:2-deoxyribose 1-phosphate catabolic process"/>
    <property type="evidence" value="ECO:0007669"/>
    <property type="project" value="UniProtKB-UniRule"/>
</dbReference>
<dbReference type="GO" id="GO:0006015">
    <property type="term" value="P:5-phosphoribose 1-diphosphate biosynthetic process"/>
    <property type="evidence" value="ECO:0007669"/>
    <property type="project" value="UniProtKB-UniPathway"/>
</dbReference>
<dbReference type="GO" id="GO:0043094">
    <property type="term" value="P:metabolic compound salvage"/>
    <property type="evidence" value="ECO:0007669"/>
    <property type="project" value="InterPro"/>
</dbReference>
<dbReference type="GO" id="GO:0009117">
    <property type="term" value="P:nucleotide metabolic process"/>
    <property type="evidence" value="ECO:0007669"/>
    <property type="project" value="InterPro"/>
</dbReference>
<dbReference type="CDD" id="cd16009">
    <property type="entry name" value="PPM"/>
    <property type="match status" value="1"/>
</dbReference>
<dbReference type="FunFam" id="3.30.70.1250:FF:000001">
    <property type="entry name" value="Phosphopentomutase"/>
    <property type="match status" value="1"/>
</dbReference>
<dbReference type="Gene3D" id="3.40.720.10">
    <property type="entry name" value="Alkaline Phosphatase, subunit A"/>
    <property type="match status" value="1"/>
</dbReference>
<dbReference type="Gene3D" id="3.30.70.1250">
    <property type="entry name" value="Phosphopentomutase"/>
    <property type="match status" value="1"/>
</dbReference>
<dbReference type="HAMAP" id="MF_00740">
    <property type="entry name" value="Phosphopentomut"/>
    <property type="match status" value="1"/>
</dbReference>
<dbReference type="InterPro" id="IPR017850">
    <property type="entry name" value="Alkaline_phosphatase_core_sf"/>
</dbReference>
<dbReference type="InterPro" id="IPR010045">
    <property type="entry name" value="DeoB"/>
</dbReference>
<dbReference type="InterPro" id="IPR006124">
    <property type="entry name" value="Metalloenzyme"/>
</dbReference>
<dbReference type="InterPro" id="IPR024052">
    <property type="entry name" value="Phosphopentomutase_DeoB_cap_sf"/>
</dbReference>
<dbReference type="NCBIfam" id="TIGR01696">
    <property type="entry name" value="deoB"/>
    <property type="match status" value="1"/>
</dbReference>
<dbReference type="NCBIfam" id="NF003766">
    <property type="entry name" value="PRK05362.1"/>
    <property type="match status" value="1"/>
</dbReference>
<dbReference type="PANTHER" id="PTHR21110">
    <property type="entry name" value="PHOSPHOPENTOMUTASE"/>
    <property type="match status" value="1"/>
</dbReference>
<dbReference type="PANTHER" id="PTHR21110:SF0">
    <property type="entry name" value="PHOSPHOPENTOMUTASE"/>
    <property type="match status" value="1"/>
</dbReference>
<dbReference type="Pfam" id="PF01676">
    <property type="entry name" value="Metalloenzyme"/>
    <property type="match status" value="1"/>
</dbReference>
<dbReference type="PIRSF" id="PIRSF001491">
    <property type="entry name" value="Ppentomutase"/>
    <property type="match status" value="1"/>
</dbReference>
<dbReference type="SUPFAM" id="SSF53649">
    <property type="entry name" value="Alkaline phosphatase-like"/>
    <property type="match status" value="1"/>
</dbReference>
<dbReference type="SUPFAM" id="SSF143856">
    <property type="entry name" value="DeoB insert domain-like"/>
    <property type="match status" value="1"/>
</dbReference>
<accession>A0RI91</accession>
<name>DEOB_BACAH</name>
<evidence type="ECO:0000255" key="1">
    <source>
        <dbReference type="HAMAP-Rule" id="MF_00740"/>
    </source>
</evidence>
<feature type="chain" id="PRO_1000046383" description="Phosphopentomutase">
    <location>
        <begin position="1"/>
        <end position="394"/>
    </location>
</feature>
<feature type="binding site" evidence="1">
    <location>
        <position position="13"/>
    </location>
    <ligand>
        <name>Mn(2+)</name>
        <dbReference type="ChEBI" id="CHEBI:29035"/>
        <label>1</label>
    </ligand>
</feature>
<feature type="binding site" evidence="1">
    <location>
        <position position="286"/>
    </location>
    <ligand>
        <name>Mn(2+)</name>
        <dbReference type="ChEBI" id="CHEBI:29035"/>
        <label>2</label>
    </ligand>
</feature>
<feature type="binding site" evidence="1">
    <location>
        <position position="291"/>
    </location>
    <ligand>
        <name>Mn(2+)</name>
        <dbReference type="ChEBI" id="CHEBI:29035"/>
        <label>2</label>
    </ligand>
</feature>
<feature type="binding site" evidence="1">
    <location>
        <position position="327"/>
    </location>
    <ligand>
        <name>Mn(2+)</name>
        <dbReference type="ChEBI" id="CHEBI:29035"/>
        <label>1</label>
    </ligand>
</feature>
<feature type="binding site" evidence="1">
    <location>
        <position position="328"/>
    </location>
    <ligand>
        <name>Mn(2+)</name>
        <dbReference type="ChEBI" id="CHEBI:29035"/>
        <label>1</label>
    </ligand>
</feature>
<feature type="binding site" evidence="1">
    <location>
        <position position="339"/>
    </location>
    <ligand>
        <name>Mn(2+)</name>
        <dbReference type="ChEBI" id="CHEBI:29035"/>
        <label>2</label>
    </ligand>
</feature>
<organism>
    <name type="scientific">Bacillus thuringiensis (strain Al Hakam)</name>
    <dbReference type="NCBI Taxonomy" id="412694"/>
    <lineage>
        <taxon>Bacteria</taxon>
        <taxon>Bacillati</taxon>
        <taxon>Bacillota</taxon>
        <taxon>Bacilli</taxon>
        <taxon>Bacillales</taxon>
        <taxon>Bacillaceae</taxon>
        <taxon>Bacillus</taxon>
        <taxon>Bacillus cereus group</taxon>
    </lineage>
</organism>
<protein>
    <recommendedName>
        <fullName evidence="1">Phosphopentomutase</fullName>
        <ecNumber evidence="1">5.4.2.7</ecNumber>
    </recommendedName>
    <alternativeName>
        <fullName evidence="1">Phosphodeoxyribomutase</fullName>
    </alternativeName>
</protein>
<gene>
    <name evidence="1" type="primary">deoB</name>
    <name type="ordered locus">BALH_3705</name>
</gene>